<gene>
    <name evidence="1" type="primary">secA</name>
    <name type="ordered locus">SGR_4531</name>
</gene>
<dbReference type="EC" id="7.4.2.8" evidence="1"/>
<dbReference type="EMBL" id="AP009493">
    <property type="protein sequence ID" value="BAG21360.1"/>
    <property type="molecule type" value="Genomic_DNA"/>
</dbReference>
<dbReference type="RefSeq" id="WP_003968757.1">
    <property type="nucleotide sequence ID" value="NC_010572.1"/>
</dbReference>
<dbReference type="SMR" id="B1VUY4"/>
<dbReference type="KEGG" id="sgr:SGR_4531"/>
<dbReference type="eggNOG" id="COG0653">
    <property type="taxonomic scope" value="Bacteria"/>
</dbReference>
<dbReference type="HOGENOM" id="CLU_005314_3_0_11"/>
<dbReference type="Proteomes" id="UP000001685">
    <property type="component" value="Chromosome"/>
</dbReference>
<dbReference type="GO" id="GO:0031522">
    <property type="term" value="C:cell envelope Sec protein transport complex"/>
    <property type="evidence" value="ECO:0007669"/>
    <property type="project" value="TreeGrafter"/>
</dbReference>
<dbReference type="GO" id="GO:0005829">
    <property type="term" value="C:cytosol"/>
    <property type="evidence" value="ECO:0007669"/>
    <property type="project" value="TreeGrafter"/>
</dbReference>
<dbReference type="GO" id="GO:0005886">
    <property type="term" value="C:plasma membrane"/>
    <property type="evidence" value="ECO:0007669"/>
    <property type="project" value="UniProtKB-SubCell"/>
</dbReference>
<dbReference type="GO" id="GO:0005524">
    <property type="term" value="F:ATP binding"/>
    <property type="evidence" value="ECO:0007669"/>
    <property type="project" value="UniProtKB-UniRule"/>
</dbReference>
<dbReference type="GO" id="GO:0008564">
    <property type="term" value="F:protein-exporting ATPase activity"/>
    <property type="evidence" value="ECO:0007669"/>
    <property type="project" value="UniProtKB-EC"/>
</dbReference>
<dbReference type="GO" id="GO:0065002">
    <property type="term" value="P:intracellular protein transmembrane transport"/>
    <property type="evidence" value="ECO:0007669"/>
    <property type="project" value="UniProtKB-UniRule"/>
</dbReference>
<dbReference type="GO" id="GO:0017038">
    <property type="term" value="P:protein import"/>
    <property type="evidence" value="ECO:0007669"/>
    <property type="project" value="InterPro"/>
</dbReference>
<dbReference type="GO" id="GO:0006605">
    <property type="term" value="P:protein targeting"/>
    <property type="evidence" value="ECO:0007669"/>
    <property type="project" value="UniProtKB-UniRule"/>
</dbReference>
<dbReference type="GO" id="GO:0043952">
    <property type="term" value="P:protein transport by the Sec complex"/>
    <property type="evidence" value="ECO:0007669"/>
    <property type="project" value="TreeGrafter"/>
</dbReference>
<dbReference type="CDD" id="cd17928">
    <property type="entry name" value="DEXDc_SecA"/>
    <property type="match status" value="1"/>
</dbReference>
<dbReference type="CDD" id="cd18803">
    <property type="entry name" value="SF2_C_secA"/>
    <property type="match status" value="1"/>
</dbReference>
<dbReference type="FunFam" id="1.10.3060.10:FF:000002">
    <property type="entry name" value="Preprotein translocase subunit SecA"/>
    <property type="match status" value="1"/>
</dbReference>
<dbReference type="FunFam" id="3.40.50.300:FF:000113">
    <property type="entry name" value="Preprotein translocase subunit SecA"/>
    <property type="match status" value="1"/>
</dbReference>
<dbReference type="FunFam" id="3.40.50.300:FF:000334">
    <property type="entry name" value="Protein translocase subunit SecA"/>
    <property type="match status" value="1"/>
</dbReference>
<dbReference type="FunFam" id="3.90.1440.10:FF:000002">
    <property type="entry name" value="Protein translocase subunit SecA"/>
    <property type="match status" value="1"/>
</dbReference>
<dbReference type="Gene3D" id="1.10.3060.10">
    <property type="entry name" value="Helical scaffold and wing domains of SecA"/>
    <property type="match status" value="1"/>
</dbReference>
<dbReference type="Gene3D" id="3.40.50.300">
    <property type="entry name" value="P-loop containing nucleotide triphosphate hydrolases"/>
    <property type="match status" value="2"/>
</dbReference>
<dbReference type="Gene3D" id="3.90.1440.10">
    <property type="entry name" value="SecA, preprotein cross-linking domain"/>
    <property type="match status" value="1"/>
</dbReference>
<dbReference type="HAMAP" id="MF_01382">
    <property type="entry name" value="SecA"/>
    <property type="match status" value="1"/>
</dbReference>
<dbReference type="InterPro" id="IPR014001">
    <property type="entry name" value="Helicase_ATP-bd"/>
</dbReference>
<dbReference type="InterPro" id="IPR001650">
    <property type="entry name" value="Helicase_C-like"/>
</dbReference>
<dbReference type="InterPro" id="IPR027417">
    <property type="entry name" value="P-loop_NTPase"/>
</dbReference>
<dbReference type="InterPro" id="IPR000185">
    <property type="entry name" value="SecA"/>
</dbReference>
<dbReference type="InterPro" id="IPR020937">
    <property type="entry name" value="SecA_CS"/>
</dbReference>
<dbReference type="InterPro" id="IPR011115">
    <property type="entry name" value="SecA_DEAD"/>
</dbReference>
<dbReference type="InterPro" id="IPR014018">
    <property type="entry name" value="SecA_motor_DEAD"/>
</dbReference>
<dbReference type="InterPro" id="IPR011130">
    <property type="entry name" value="SecA_preprotein_X-link_dom"/>
</dbReference>
<dbReference type="InterPro" id="IPR044722">
    <property type="entry name" value="SecA_SF2_C"/>
</dbReference>
<dbReference type="InterPro" id="IPR011116">
    <property type="entry name" value="SecA_Wing/Scaffold"/>
</dbReference>
<dbReference type="InterPro" id="IPR036266">
    <property type="entry name" value="SecA_Wing/Scaffold_sf"/>
</dbReference>
<dbReference type="InterPro" id="IPR036670">
    <property type="entry name" value="SecA_X-link_sf"/>
</dbReference>
<dbReference type="NCBIfam" id="NF009538">
    <property type="entry name" value="PRK12904.1"/>
    <property type="match status" value="1"/>
</dbReference>
<dbReference type="NCBIfam" id="TIGR00963">
    <property type="entry name" value="secA"/>
    <property type="match status" value="1"/>
</dbReference>
<dbReference type="PANTHER" id="PTHR30612:SF0">
    <property type="entry name" value="CHLOROPLAST PROTEIN-TRANSPORTING ATPASE"/>
    <property type="match status" value="1"/>
</dbReference>
<dbReference type="PANTHER" id="PTHR30612">
    <property type="entry name" value="SECA INNER MEMBRANE COMPONENT OF SEC PROTEIN SECRETION SYSTEM"/>
    <property type="match status" value="1"/>
</dbReference>
<dbReference type="Pfam" id="PF21090">
    <property type="entry name" value="P-loop_SecA"/>
    <property type="match status" value="1"/>
</dbReference>
<dbReference type="Pfam" id="PF07517">
    <property type="entry name" value="SecA_DEAD"/>
    <property type="match status" value="1"/>
</dbReference>
<dbReference type="Pfam" id="PF01043">
    <property type="entry name" value="SecA_PP_bind"/>
    <property type="match status" value="1"/>
</dbReference>
<dbReference type="Pfam" id="PF07516">
    <property type="entry name" value="SecA_SW"/>
    <property type="match status" value="1"/>
</dbReference>
<dbReference type="PRINTS" id="PR00906">
    <property type="entry name" value="SECA"/>
</dbReference>
<dbReference type="SMART" id="SM00957">
    <property type="entry name" value="SecA_DEAD"/>
    <property type="match status" value="1"/>
</dbReference>
<dbReference type="SMART" id="SM00958">
    <property type="entry name" value="SecA_PP_bind"/>
    <property type="match status" value="1"/>
</dbReference>
<dbReference type="SUPFAM" id="SSF81886">
    <property type="entry name" value="Helical scaffold and wing domains of SecA"/>
    <property type="match status" value="1"/>
</dbReference>
<dbReference type="SUPFAM" id="SSF52540">
    <property type="entry name" value="P-loop containing nucleoside triphosphate hydrolases"/>
    <property type="match status" value="2"/>
</dbReference>
<dbReference type="SUPFAM" id="SSF81767">
    <property type="entry name" value="Pre-protein crosslinking domain of SecA"/>
    <property type="match status" value="1"/>
</dbReference>
<dbReference type="PROSITE" id="PS01312">
    <property type="entry name" value="SECA"/>
    <property type="match status" value="1"/>
</dbReference>
<dbReference type="PROSITE" id="PS51196">
    <property type="entry name" value="SECA_MOTOR_DEAD"/>
    <property type="match status" value="1"/>
</dbReference>
<evidence type="ECO:0000255" key="1">
    <source>
        <dbReference type="HAMAP-Rule" id="MF_01382"/>
    </source>
</evidence>
<evidence type="ECO:0000256" key="2">
    <source>
        <dbReference type="SAM" id="MobiDB-lite"/>
    </source>
</evidence>
<protein>
    <recommendedName>
        <fullName evidence="1">Protein translocase subunit SecA</fullName>
        <ecNumber evidence="1">7.4.2.8</ecNumber>
    </recommendedName>
</protein>
<organism>
    <name type="scientific">Streptomyces griseus subsp. griseus (strain JCM 4626 / CBS 651.72 / NBRC 13350 / KCC S-0626 / ISP 5235)</name>
    <dbReference type="NCBI Taxonomy" id="455632"/>
    <lineage>
        <taxon>Bacteria</taxon>
        <taxon>Bacillati</taxon>
        <taxon>Actinomycetota</taxon>
        <taxon>Actinomycetes</taxon>
        <taxon>Kitasatosporales</taxon>
        <taxon>Streptomycetaceae</taxon>
        <taxon>Streptomyces</taxon>
    </lineage>
</organism>
<reference key="1">
    <citation type="journal article" date="2008" name="J. Bacteriol.">
        <title>Genome sequence of the streptomycin-producing microorganism Streptomyces griseus IFO 13350.</title>
        <authorList>
            <person name="Ohnishi Y."/>
            <person name="Ishikawa J."/>
            <person name="Hara H."/>
            <person name="Suzuki H."/>
            <person name="Ikenoya M."/>
            <person name="Ikeda H."/>
            <person name="Yamashita A."/>
            <person name="Hattori M."/>
            <person name="Horinouchi S."/>
        </authorList>
    </citation>
    <scope>NUCLEOTIDE SEQUENCE [LARGE SCALE GENOMIC DNA]</scope>
    <source>
        <strain>JCM 4626 / CBS 651.72 / NBRC 13350 / KCC S-0626 / ISP 5235</strain>
    </source>
</reference>
<keyword id="KW-0067">ATP-binding</keyword>
<keyword id="KW-1003">Cell membrane</keyword>
<keyword id="KW-0963">Cytoplasm</keyword>
<keyword id="KW-0472">Membrane</keyword>
<keyword id="KW-0547">Nucleotide-binding</keyword>
<keyword id="KW-0653">Protein transport</keyword>
<keyword id="KW-1278">Translocase</keyword>
<keyword id="KW-0811">Translocation</keyword>
<keyword id="KW-0813">Transport</keyword>
<comment type="function">
    <text evidence="1">Part of the Sec protein translocase complex. Interacts with the SecYEG preprotein conducting channel. Has a central role in coupling the hydrolysis of ATP to the transfer of proteins into and across the cell membrane, serving as an ATP-driven molecular motor driving the stepwise translocation of polypeptide chains across the membrane.</text>
</comment>
<comment type="catalytic activity">
    <reaction evidence="1">
        <text>ATP + H2O + cellular proteinSide 1 = ADP + phosphate + cellular proteinSide 2.</text>
        <dbReference type="EC" id="7.4.2.8"/>
    </reaction>
</comment>
<comment type="subunit">
    <text evidence="1">Monomer and homodimer. Part of the essential Sec protein translocation apparatus which comprises SecA, SecYEG and auxiliary proteins SecDF. Other proteins may also be involved.</text>
</comment>
<comment type="subcellular location">
    <subcellularLocation>
        <location evidence="1">Cell membrane</location>
        <topology evidence="1">Peripheral membrane protein</topology>
        <orientation evidence="1">Cytoplasmic side</orientation>
    </subcellularLocation>
    <subcellularLocation>
        <location evidence="1">Cytoplasm</location>
    </subcellularLocation>
    <text evidence="1">Distribution is 50-50.</text>
</comment>
<comment type="similarity">
    <text evidence="1">Belongs to the SecA family.</text>
</comment>
<feature type="chain" id="PRO_1000145065" description="Protein translocase subunit SecA">
    <location>
        <begin position="1"/>
        <end position="939"/>
    </location>
</feature>
<feature type="region of interest" description="Disordered" evidence="2">
    <location>
        <begin position="850"/>
        <end position="939"/>
    </location>
</feature>
<feature type="compositionally biased region" description="Basic and acidic residues" evidence="2">
    <location>
        <begin position="854"/>
        <end position="864"/>
    </location>
</feature>
<feature type="compositionally biased region" description="Basic residues" evidence="2">
    <location>
        <begin position="924"/>
        <end position="939"/>
    </location>
</feature>
<feature type="binding site" evidence="1">
    <location>
        <position position="85"/>
    </location>
    <ligand>
        <name>ATP</name>
        <dbReference type="ChEBI" id="CHEBI:30616"/>
    </ligand>
</feature>
<feature type="binding site" evidence="1">
    <location>
        <begin position="103"/>
        <end position="107"/>
    </location>
    <ligand>
        <name>ATP</name>
        <dbReference type="ChEBI" id="CHEBI:30616"/>
    </ligand>
</feature>
<feature type="binding site" evidence="1">
    <location>
        <position position="504"/>
    </location>
    <ligand>
        <name>ATP</name>
        <dbReference type="ChEBI" id="CHEBI:30616"/>
    </ligand>
</feature>
<sequence length="939" mass="105233">MSVFNKLMRAGEGKILRKLHRIADQVSSIEEDFVNLSDAELRALTDEYKERYADGESLDDLLPEAFATVREAAKRVLGQRHYDVQMMGGAALHLGYVAEMKTGEGKTLVGTLPAYLNALSGKGVHLITVNDYLAERDSELMGRVHKFLGLSVGCIVANMTPAQRREQYGCDITYGTNNEFGFDYLRDNMAWSKDELVQRGHNFAVVDEVDSILVDEARTPLIISGPADQATKWYGDFAKLVTRLTKGEAGNQLKGIEETGDYEVDEKKRTVAIHEAGVAKVEDWLGIDNLYESVNTPLVGYLNNAIKAKELFKKDKDYVVIDGEVMIVDEHTGRILAGRRYNEGMHQAIEAKEGVDIKDENQTLATITLQNFFRLYDKLSGMTGTAMTEAAEFHQIYKLGVVPIPTNRPMVRADQSDLIYRTEVAKFAAVVDDIAEKHEKGQPILVGTTSVEKSEYLSQQLSKRGVQHEVLNAKQHDREATIVAQAGRKGAVTVATNMAGRGTDIKLGGNPDDLAEAELRQRGLDPVENVEEWAAALPAALETAEQAVKAEFEEVKDLGGLYVLGTERHESRRIDNQLRGRSGRQGDPGESRFYLSLGDDLMRLFKAQMVERVMSMANVPDDVPIENKMVTRAIASAQSQVEQQNFETRKNVLKYDEVLNRQREVIYGERRRVLEGEDLQEQIRHFMDDTIDDYIRQETAEGFAEEWDLDRLWGAFKQLYPVKVTVDELEEAAGDLAGVTAEFIAESVKNDIHEQYEERENTLGSDIMRELERRVVLSVLDRKWREHLYEMDYLQEGIGLRAMAQKDPLVEYQREGFDMFNAMMEGIKEESVGYLFNLEVQVEQQVEEVPVQDGAERPSLEKEGATAAPQIRAKGLEAPQRPDRLHFSAPTVDGEGGVVEGDFANDEATGDTRSGSADGMTRAERRKAQKGGGGRRRKK</sequence>
<name>SECA_STRGG</name>
<proteinExistence type="inferred from homology"/>
<accession>B1VUY4</accession>